<protein>
    <recommendedName>
        <fullName evidence="1">Aspartate carbamoyltransferase catalytic subunit</fullName>
        <ecNumber evidence="1">2.1.3.2</ecNumber>
    </recommendedName>
    <alternativeName>
        <fullName evidence="1">Aspartate transcarbamylase</fullName>
        <shortName evidence="1">ATCase</shortName>
    </alternativeName>
</protein>
<organism>
    <name type="scientific">Bacillus subtilis (strain 168)</name>
    <dbReference type="NCBI Taxonomy" id="224308"/>
    <lineage>
        <taxon>Bacteria</taxon>
        <taxon>Bacillati</taxon>
        <taxon>Bacillota</taxon>
        <taxon>Bacilli</taxon>
        <taxon>Bacillales</taxon>
        <taxon>Bacillaceae</taxon>
        <taxon>Bacillus</taxon>
    </lineage>
</organism>
<proteinExistence type="evidence at protein level"/>
<evidence type="ECO:0000255" key="1">
    <source>
        <dbReference type="HAMAP-Rule" id="MF_00001"/>
    </source>
</evidence>
<evidence type="ECO:0000269" key="2">
    <source>
    </source>
</evidence>
<evidence type="ECO:0000305" key="3"/>
<evidence type="ECO:0007829" key="4">
    <source>
        <dbReference type="PDB" id="3R7D"/>
    </source>
</evidence>
<evidence type="ECO:0007829" key="5">
    <source>
        <dbReference type="PDB" id="3R7F"/>
    </source>
</evidence>
<sequence>MKHLTTMSELSTEEIKDLLQTAQELKSGKTDNQLTGKFAANLFFEPSTRTRFSFEVAEKKLGMNVLNLDGTSTSVQKGETLYDTIRTLESIGVDVCVIRHSEDEYYEELVSQVNIPILNAGDGCGQHPTQSLLDLMTIYEEFNTFKGLTVSIHGDIKHSRVARSNAEVLTRLGARVLFSGPSEWQDEENTFGTYVSMDEAVESSDVVMLLRIQNERHQSAVSQEGYLNKYGLTVERAERMKRHAIIMHPAPVNRGVEIDDSLVESEKSRIFKQMKNGVFIRMAVIQRALQTNVKRGEAAYVISH</sequence>
<comment type="function">
    <text evidence="1">Catalyzes the condensation of carbamoyl phosphate and aspartate to form carbamoyl aspartate and inorganic phosphate, the committed step in the de novo pyrimidine nucleotide biosynthesis pathway.</text>
</comment>
<comment type="catalytic activity">
    <reaction evidence="1">
        <text>carbamoyl phosphate + L-aspartate = N-carbamoyl-L-aspartate + phosphate + H(+)</text>
        <dbReference type="Rhea" id="RHEA:20013"/>
        <dbReference type="ChEBI" id="CHEBI:15378"/>
        <dbReference type="ChEBI" id="CHEBI:29991"/>
        <dbReference type="ChEBI" id="CHEBI:32814"/>
        <dbReference type="ChEBI" id="CHEBI:43474"/>
        <dbReference type="ChEBI" id="CHEBI:58228"/>
        <dbReference type="EC" id="2.1.3.2"/>
    </reaction>
</comment>
<comment type="pathway">
    <text evidence="1">Pyrimidine metabolism; UMP biosynthesis via de novo pathway; (S)-dihydroorotate from bicarbonate: step 2/3.</text>
</comment>
<comment type="subunit">
    <text evidence="1">Heterododecamer (2C3:3R2) of six catalytic PyrB chains organized as two trimers (C3), and six regulatory PyrI chains organized as three dimers (R2).</text>
</comment>
<comment type="similarity">
    <text evidence="1 3">Belongs to the aspartate/ornithine carbamoyltransferase superfamily. ATCase family.</text>
</comment>
<gene>
    <name evidence="1" type="primary">pyrB</name>
    <name type="ordered locus">BSU15490</name>
</gene>
<accession>P05654</accession>
<name>PYRB_BACSU</name>
<keyword id="KW-0002">3D-structure</keyword>
<keyword id="KW-0597">Phosphoprotein</keyword>
<keyword id="KW-0665">Pyrimidine biosynthesis</keyword>
<keyword id="KW-1185">Reference proteome</keyword>
<keyword id="KW-0808">Transferase</keyword>
<feature type="chain" id="PRO_0000113099" description="Aspartate carbamoyltransferase catalytic subunit">
    <location>
        <begin position="1"/>
        <end position="304"/>
    </location>
</feature>
<feature type="binding site" evidence="1">
    <location>
        <position position="49"/>
    </location>
    <ligand>
        <name>carbamoyl phosphate</name>
        <dbReference type="ChEBI" id="CHEBI:58228"/>
    </ligand>
</feature>
<feature type="binding site" evidence="1">
    <location>
        <position position="50"/>
    </location>
    <ligand>
        <name>carbamoyl phosphate</name>
        <dbReference type="ChEBI" id="CHEBI:58228"/>
    </ligand>
</feature>
<feature type="binding site" evidence="1">
    <location>
        <position position="77"/>
    </location>
    <ligand>
        <name>L-aspartate</name>
        <dbReference type="ChEBI" id="CHEBI:29991"/>
    </ligand>
</feature>
<feature type="binding site" evidence="1">
    <location>
        <position position="99"/>
    </location>
    <ligand>
        <name>carbamoyl phosphate</name>
        <dbReference type="ChEBI" id="CHEBI:58228"/>
    </ligand>
</feature>
<feature type="binding site" evidence="1">
    <location>
        <position position="127"/>
    </location>
    <ligand>
        <name>carbamoyl phosphate</name>
        <dbReference type="ChEBI" id="CHEBI:58228"/>
    </ligand>
</feature>
<feature type="binding site" evidence="1">
    <location>
        <position position="130"/>
    </location>
    <ligand>
        <name>carbamoyl phosphate</name>
        <dbReference type="ChEBI" id="CHEBI:58228"/>
    </ligand>
</feature>
<feature type="binding site" evidence="1">
    <location>
        <position position="160"/>
    </location>
    <ligand>
        <name>L-aspartate</name>
        <dbReference type="ChEBI" id="CHEBI:29991"/>
    </ligand>
</feature>
<feature type="binding site" evidence="1">
    <location>
        <position position="211"/>
    </location>
    <ligand>
        <name>L-aspartate</name>
        <dbReference type="ChEBI" id="CHEBI:29991"/>
    </ligand>
</feature>
<feature type="binding site" evidence="1">
    <location>
        <position position="250"/>
    </location>
    <ligand>
        <name>carbamoyl phosphate</name>
        <dbReference type="ChEBI" id="CHEBI:58228"/>
    </ligand>
</feature>
<feature type="binding site" evidence="1">
    <location>
        <position position="251"/>
    </location>
    <ligand>
        <name>carbamoyl phosphate</name>
        <dbReference type="ChEBI" id="CHEBI:58228"/>
    </ligand>
</feature>
<feature type="modified residue" description="Phosphoserine" evidence="2">
    <location>
        <position position="303"/>
    </location>
</feature>
<feature type="sequence conflict" description="In Ref. 1; AAA22685 and 2; AAA21267." evidence="3" ref="1 2">
    <original>R</original>
    <variation>C</variation>
    <location>
        <position position="287"/>
    </location>
</feature>
<feature type="helix" evidence="5">
    <location>
        <begin position="7"/>
        <end position="9"/>
    </location>
</feature>
<feature type="helix" evidence="5">
    <location>
        <begin position="12"/>
        <end position="26"/>
    </location>
</feature>
<feature type="turn" evidence="5">
    <location>
        <begin position="33"/>
        <end position="36"/>
    </location>
</feature>
<feature type="strand" evidence="5">
    <location>
        <begin position="38"/>
        <end position="45"/>
    </location>
</feature>
<feature type="helix" evidence="5">
    <location>
        <begin position="49"/>
        <end position="60"/>
    </location>
</feature>
<feature type="strand" evidence="5">
    <location>
        <begin position="64"/>
        <end position="69"/>
    </location>
</feature>
<feature type="helix" evidence="4">
    <location>
        <begin position="73"/>
        <end position="76"/>
    </location>
</feature>
<feature type="strand" evidence="5">
    <location>
        <begin position="77"/>
        <end position="79"/>
    </location>
</feature>
<feature type="helix" evidence="5">
    <location>
        <begin position="81"/>
        <end position="91"/>
    </location>
</feature>
<feature type="strand" evidence="5">
    <location>
        <begin position="95"/>
        <end position="99"/>
    </location>
</feature>
<feature type="turn" evidence="4">
    <location>
        <begin position="103"/>
        <end position="105"/>
    </location>
</feature>
<feature type="helix" evidence="5">
    <location>
        <begin position="106"/>
        <end position="112"/>
    </location>
</feature>
<feature type="strand" evidence="5">
    <location>
        <begin position="117"/>
        <end position="120"/>
    </location>
</feature>
<feature type="helix" evidence="5">
    <location>
        <begin position="128"/>
        <end position="142"/>
    </location>
</feature>
<feature type="strand" evidence="5">
    <location>
        <begin position="149"/>
        <end position="154"/>
    </location>
</feature>
<feature type="helix" evidence="4">
    <location>
        <begin position="156"/>
        <end position="158"/>
    </location>
</feature>
<feature type="helix" evidence="5">
    <location>
        <begin position="160"/>
        <end position="171"/>
    </location>
</feature>
<feature type="strand" evidence="5">
    <location>
        <begin position="175"/>
        <end position="180"/>
    </location>
</feature>
<feature type="helix" evidence="5">
    <location>
        <begin position="182"/>
        <end position="184"/>
    </location>
</feature>
<feature type="strand" evidence="4">
    <location>
        <begin position="192"/>
        <end position="194"/>
    </location>
</feature>
<feature type="helix" evidence="5">
    <location>
        <begin position="197"/>
        <end position="203"/>
    </location>
</feature>
<feature type="strand" evidence="5">
    <location>
        <begin position="205"/>
        <end position="209"/>
    </location>
</feature>
<feature type="turn" evidence="5">
    <location>
        <begin position="214"/>
        <end position="216"/>
    </location>
</feature>
<feature type="helix" evidence="4">
    <location>
        <begin position="220"/>
        <end position="224"/>
    </location>
</feature>
<feature type="helix" evidence="5">
    <location>
        <begin position="226"/>
        <end position="230"/>
    </location>
</feature>
<feature type="helix" evidence="5">
    <location>
        <begin position="234"/>
        <end position="237"/>
    </location>
</feature>
<feature type="strand" evidence="5">
    <location>
        <begin position="245"/>
        <end position="247"/>
    </location>
</feature>
<feature type="turn" evidence="5">
    <location>
        <begin position="254"/>
        <end position="256"/>
    </location>
</feature>
<feature type="helix" evidence="5">
    <location>
        <begin position="260"/>
        <end position="262"/>
    </location>
</feature>
<feature type="helix" evidence="5">
    <location>
        <begin position="270"/>
        <end position="289"/>
    </location>
</feature>
<dbReference type="EC" id="2.1.3.2" evidence="1"/>
<dbReference type="EMBL" id="M13128">
    <property type="protein sequence ID" value="AAA22685.1"/>
    <property type="molecule type" value="Genomic_DNA"/>
</dbReference>
<dbReference type="EMBL" id="M59757">
    <property type="protein sequence ID" value="AAA21267.1"/>
    <property type="molecule type" value="Genomic_DNA"/>
</dbReference>
<dbReference type="EMBL" id="AL009126">
    <property type="protein sequence ID" value="CAB13423.2"/>
    <property type="molecule type" value="Genomic_DNA"/>
</dbReference>
<dbReference type="PIR" id="A25015">
    <property type="entry name" value="OWBSAC"/>
</dbReference>
<dbReference type="RefSeq" id="NP_389432.2">
    <property type="nucleotide sequence ID" value="NC_000964.3"/>
</dbReference>
<dbReference type="RefSeq" id="WP_003245123.1">
    <property type="nucleotide sequence ID" value="NZ_OZ025638.1"/>
</dbReference>
<dbReference type="PDB" id="2AT2">
    <property type="method" value="X-ray"/>
    <property type="resolution" value="3.00 A"/>
    <property type="chains" value="A/B/C=1-300"/>
</dbReference>
<dbReference type="PDB" id="3R7D">
    <property type="method" value="X-ray"/>
    <property type="resolution" value="2.20 A"/>
    <property type="chains" value="A/B/C=1-304"/>
</dbReference>
<dbReference type="PDB" id="3R7F">
    <property type="method" value="X-ray"/>
    <property type="resolution" value="2.10 A"/>
    <property type="chains" value="A/B/C=1-304"/>
</dbReference>
<dbReference type="PDB" id="3R7L">
    <property type="method" value="X-ray"/>
    <property type="resolution" value="2.58 A"/>
    <property type="chains" value="A/B/C/D/E/F=1-304"/>
</dbReference>
<dbReference type="PDBsum" id="2AT2"/>
<dbReference type="PDBsum" id="3R7D"/>
<dbReference type="PDBsum" id="3R7F"/>
<dbReference type="PDBsum" id="3R7L"/>
<dbReference type="SMR" id="P05654"/>
<dbReference type="FunCoup" id="P05654">
    <property type="interactions" value="632"/>
</dbReference>
<dbReference type="STRING" id="224308.BSU15490"/>
<dbReference type="iPTMnet" id="P05654"/>
<dbReference type="PaxDb" id="224308-BSU15490"/>
<dbReference type="EnsemblBacteria" id="CAB13423">
    <property type="protein sequence ID" value="CAB13423"/>
    <property type="gene ID" value="BSU_15490"/>
</dbReference>
<dbReference type="GeneID" id="937734"/>
<dbReference type="KEGG" id="bsu:BSU15490"/>
<dbReference type="PATRIC" id="fig|224308.179.peg.1688"/>
<dbReference type="eggNOG" id="COG0540">
    <property type="taxonomic scope" value="Bacteria"/>
</dbReference>
<dbReference type="InParanoid" id="P05654"/>
<dbReference type="OrthoDB" id="9774690at2"/>
<dbReference type="PhylomeDB" id="P05654"/>
<dbReference type="BioCyc" id="BSUB:BSU15490-MONOMER"/>
<dbReference type="BioCyc" id="MetaCyc:BSU15490-MONOMER"/>
<dbReference type="BRENDA" id="2.1.3.2">
    <property type="organism ID" value="658"/>
</dbReference>
<dbReference type="SABIO-RK" id="P05654"/>
<dbReference type="UniPathway" id="UPA00070">
    <property type="reaction ID" value="UER00116"/>
</dbReference>
<dbReference type="EvolutionaryTrace" id="P05654"/>
<dbReference type="Proteomes" id="UP000001570">
    <property type="component" value="Chromosome"/>
</dbReference>
<dbReference type="GO" id="GO:0016597">
    <property type="term" value="F:amino acid binding"/>
    <property type="evidence" value="ECO:0007669"/>
    <property type="project" value="InterPro"/>
</dbReference>
<dbReference type="GO" id="GO:0004070">
    <property type="term" value="F:aspartate carbamoyltransferase activity"/>
    <property type="evidence" value="ECO:0007669"/>
    <property type="project" value="UniProtKB-UniRule"/>
</dbReference>
<dbReference type="GO" id="GO:0006207">
    <property type="term" value="P:'de novo' pyrimidine nucleobase biosynthetic process"/>
    <property type="evidence" value="ECO:0007669"/>
    <property type="project" value="InterPro"/>
</dbReference>
<dbReference type="GO" id="GO:0044205">
    <property type="term" value="P:'de novo' UMP biosynthetic process"/>
    <property type="evidence" value="ECO:0007669"/>
    <property type="project" value="UniProtKB-UniRule"/>
</dbReference>
<dbReference type="GO" id="GO:0006520">
    <property type="term" value="P:amino acid metabolic process"/>
    <property type="evidence" value="ECO:0007669"/>
    <property type="project" value="InterPro"/>
</dbReference>
<dbReference type="FunFam" id="3.40.50.1370:FF:000001">
    <property type="entry name" value="Aspartate carbamoyltransferase"/>
    <property type="match status" value="1"/>
</dbReference>
<dbReference type="FunFam" id="3.40.50.1370:FF:000011">
    <property type="entry name" value="Aspartate carbamoyltransferase"/>
    <property type="match status" value="1"/>
</dbReference>
<dbReference type="Gene3D" id="3.40.50.1370">
    <property type="entry name" value="Aspartate/ornithine carbamoyltransferase"/>
    <property type="match status" value="2"/>
</dbReference>
<dbReference type="HAMAP" id="MF_00001">
    <property type="entry name" value="Asp_carb_tr"/>
    <property type="match status" value="1"/>
</dbReference>
<dbReference type="InterPro" id="IPR006132">
    <property type="entry name" value="Asp/Orn_carbamoyltranf_P-bd"/>
</dbReference>
<dbReference type="InterPro" id="IPR006130">
    <property type="entry name" value="Asp/Orn_carbamoylTrfase"/>
</dbReference>
<dbReference type="InterPro" id="IPR036901">
    <property type="entry name" value="Asp/Orn_carbamoylTrfase_sf"/>
</dbReference>
<dbReference type="InterPro" id="IPR002082">
    <property type="entry name" value="Asp_carbamoyltransf"/>
</dbReference>
<dbReference type="InterPro" id="IPR006131">
    <property type="entry name" value="Asp_carbamoyltransf_Asp/Orn-bd"/>
</dbReference>
<dbReference type="NCBIfam" id="TIGR00670">
    <property type="entry name" value="asp_carb_tr"/>
    <property type="match status" value="1"/>
</dbReference>
<dbReference type="NCBIfam" id="NF002032">
    <property type="entry name" value="PRK00856.1"/>
    <property type="match status" value="1"/>
</dbReference>
<dbReference type="PANTHER" id="PTHR45753:SF6">
    <property type="entry name" value="ASPARTATE CARBAMOYLTRANSFERASE"/>
    <property type="match status" value="1"/>
</dbReference>
<dbReference type="PANTHER" id="PTHR45753">
    <property type="entry name" value="ORNITHINE CARBAMOYLTRANSFERASE, MITOCHONDRIAL"/>
    <property type="match status" value="1"/>
</dbReference>
<dbReference type="Pfam" id="PF00185">
    <property type="entry name" value="OTCace"/>
    <property type="match status" value="1"/>
</dbReference>
<dbReference type="Pfam" id="PF02729">
    <property type="entry name" value="OTCace_N"/>
    <property type="match status" value="1"/>
</dbReference>
<dbReference type="PRINTS" id="PR00100">
    <property type="entry name" value="AOTCASE"/>
</dbReference>
<dbReference type="PRINTS" id="PR00101">
    <property type="entry name" value="ATCASE"/>
</dbReference>
<dbReference type="SUPFAM" id="SSF53671">
    <property type="entry name" value="Aspartate/ornithine carbamoyltransferase"/>
    <property type="match status" value="1"/>
</dbReference>
<dbReference type="PROSITE" id="PS00097">
    <property type="entry name" value="CARBAMOYLTRANSFERASE"/>
    <property type="match status" value="1"/>
</dbReference>
<reference key="1">
    <citation type="journal article" date="1986" name="J. Biol. Chem.">
        <title>Cloning and structure of the Bacillus subtilis aspartate transcarbamylase gene (pyrB).</title>
        <authorList>
            <person name="Lerner C.G."/>
            <person name="Switzer R.L."/>
        </authorList>
    </citation>
    <scope>NUCLEOTIDE SEQUENCE [GENOMIC DNA]</scope>
</reference>
<reference key="2">
    <citation type="journal article" date="1991" name="J. Biol. Chem.">
        <title>Functional organization and nucleotide sequence of the Bacillus subtilis pyrimidine biosynthetic operon.</title>
        <authorList>
            <person name="Quinn C.L."/>
            <person name="Stephenson B.T."/>
            <person name="Switzer R.L."/>
        </authorList>
    </citation>
    <scope>NUCLEOTIDE SEQUENCE [GENOMIC DNA]</scope>
</reference>
<reference key="3">
    <citation type="journal article" date="1997" name="Nature">
        <title>The complete genome sequence of the Gram-positive bacterium Bacillus subtilis.</title>
        <authorList>
            <person name="Kunst F."/>
            <person name="Ogasawara N."/>
            <person name="Moszer I."/>
            <person name="Albertini A.M."/>
            <person name="Alloni G."/>
            <person name="Azevedo V."/>
            <person name="Bertero M.G."/>
            <person name="Bessieres P."/>
            <person name="Bolotin A."/>
            <person name="Borchert S."/>
            <person name="Borriss R."/>
            <person name="Boursier L."/>
            <person name="Brans A."/>
            <person name="Braun M."/>
            <person name="Brignell S.C."/>
            <person name="Bron S."/>
            <person name="Brouillet S."/>
            <person name="Bruschi C.V."/>
            <person name="Caldwell B."/>
            <person name="Capuano V."/>
            <person name="Carter N.M."/>
            <person name="Choi S.-K."/>
            <person name="Codani J.-J."/>
            <person name="Connerton I.F."/>
            <person name="Cummings N.J."/>
            <person name="Daniel R.A."/>
            <person name="Denizot F."/>
            <person name="Devine K.M."/>
            <person name="Duesterhoeft A."/>
            <person name="Ehrlich S.D."/>
            <person name="Emmerson P.T."/>
            <person name="Entian K.-D."/>
            <person name="Errington J."/>
            <person name="Fabret C."/>
            <person name="Ferrari E."/>
            <person name="Foulger D."/>
            <person name="Fritz C."/>
            <person name="Fujita M."/>
            <person name="Fujita Y."/>
            <person name="Fuma S."/>
            <person name="Galizzi A."/>
            <person name="Galleron N."/>
            <person name="Ghim S.-Y."/>
            <person name="Glaser P."/>
            <person name="Goffeau A."/>
            <person name="Golightly E.J."/>
            <person name="Grandi G."/>
            <person name="Guiseppi G."/>
            <person name="Guy B.J."/>
            <person name="Haga K."/>
            <person name="Haiech J."/>
            <person name="Harwood C.R."/>
            <person name="Henaut A."/>
            <person name="Hilbert H."/>
            <person name="Holsappel S."/>
            <person name="Hosono S."/>
            <person name="Hullo M.-F."/>
            <person name="Itaya M."/>
            <person name="Jones L.-M."/>
            <person name="Joris B."/>
            <person name="Karamata D."/>
            <person name="Kasahara Y."/>
            <person name="Klaerr-Blanchard M."/>
            <person name="Klein C."/>
            <person name="Kobayashi Y."/>
            <person name="Koetter P."/>
            <person name="Koningstein G."/>
            <person name="Krogh S."/>
            <person name="Kumano M."/>
            <person name="Kurita K."/>
            <person name="Lapidus A."/>
            <person name="Lardinois S."/>
            <person name="Lauber J."/>
            <person name="Lazarevic V."/>
            <person name="Lee S.-M."/>
            <person name="Levine A."/>
            <person name="Liu H."/>
            <person name="Masuda S."/>
            <person name="Mauel C."/>
            <person name="Medigue C."/>
            <person name="Medina N."/>
            <person name="Mellado R.P."/>
            <person name="Mizuno M."/>
            <person name="Moestl D."/>
            <person name="Nakai S."/>
            <person name="Noback M."/>
            <person name="Noone D."/>
            <person name="O'Reilly M."/>
            <person name="Ogawa K."/>
            <person name="Ogiwara A."/>
            <person name="Oudega B."/>
            <person name="Park S.-H."/>
            <person name="Parro V."/>
            <person name="Pohl T.M."/>
            <person name="Portetelle D."/>
            <person name="Porwollik S."/>
            <person name="Prescott A.M."/>
            <person name="Presecan E."/>
            <person name="Pujic P."/>
            <person name="Purnelle B."/>
            <person name="Rapoport G."/>
            <person name="Rey M."/>
            <person name="Reynolds S."/>
            <person name="Rieger M."/>
            <person name="Rivolta C."/>
            <person name="Rocha E."/>
            <person name="Roche B."/>
            <person name="Rose M."/>
            <person name="Sadaie Y."/>
            <person name="Sato T."/>
            <person name="Scanlan E."/>
            <person name="Schleich S."/>
            <person name="Schroeter R."/>
            <person name="Scoffone F."/>
            <person name="Sekiguchi J."/>
            <person name="Sekowska A."/>
            <person name="Seror S.J."/>
            <person name="Serror P."/>
            <person name="Shin B.-S."/>
            <person name="Soldo B."/>
            <person name="Sorokin A."/>
            <person name="Tacconi E."/>
            <person name="Takagi T."/>
            <person name="Takahashi H."/>
            <person name="Takemaru K."/>
            <person name="Takeuchi M."/>
            <person name="Tamakoshi A."/>
            <person name="Tanaka T."/>
            <person name="Terpstra P."/>
            <person name="Tognoni A."/>
            <person name="Tosato V."/>
            <person name="Uchiyama S."/>
            <person name="Vandenbol M."/>
            <person name="Vannier F."/>
            <person name="Vassarotti A."/>
            <person name="Viari A."/>
            <person name="Wambutt R."/>
            <person name="Wedler E."/>
            <person name="Wedler H."/>
            <person name="Weitzenegger T."/>
            <person name="Winters P."/>
            <person name="Wipat A."/>
            <person name="Yamamoto H."/>
            <person name="Yamane K."/>
            <person name="Yasumoto K."/>
            <person name="Yata K."/>
            <person name="Yoshida K."/>
            <person name="Yoshikawa H.-F."/>
            <person name="Zumstein E."/>
            <person name="Yoshikawa H."/>
            <person name="Danchin A."/>
        </authorList>
    </citation>
    <scope>NUCLEOTIDE SEQUENCE [LARGE SCALE GENOMIC DNA]</scope>
    <source>
        <strain>168</strain>
    </source>
</reference>
<reference key="4">
    <citation type="journal article" date="2009" name="Microbiology">
        <title>From a consortium sequence to a unified sequence: the Bacillus subtilis 168 reference genome a decade later.</title>
        <authorList>
            <person name="Barbe V."/>
            <person name="Cruveiller S."/>
            <person name="Kunst F."/>
            <person name="Lenoble P."/>
            <person name="Meurice G."/>
            <person name="Sekowska A."/>
            <person name="Vallenet D."/>
            <person name="Wang T."/>
            <person name="Moszer I."/>
            <person name="Medigue C."/>
            <person name="Danchin A."/>
        </authorList>
    </citation>
    <scope>SEQUENCE REVISION TO 287</scope>
</reference>
<reference key="5">
    <citation type="journal article" date="2007" name="Mol. Cell. Proteomics">
        <title>The serine/threonine/tyrosine phosphoproteome of the model bacterium Bacillus subtilis.</title>
        <authorList>
            <person name="Macek B."/>
            <person name="Mijakovic I."/>
            <person name="Olsen J.V."/>
            <person name="Gnad F."/>
            <person name="Kumar C."/>
            <person name="Jensen P.R."/>
            <person name="Mann M."/>
        </authorList>
    </citation>
    <scope>PHOSPHORYLATION [LARGE SCALE ANALYSIS] AT SER-303</scope>
    <scope>IDENTIFICATION BY MASS SPECTROMETRY</scope>
    <source>
        <strain>168</strain>
    </source>
</reference>
<reference key="6">
    <citation type="journal article" date="1991" name="Proc. Natl. Acad. Sci. U.S.A.">
        <title>Molecular structure of Bacillus subtilis aspartate transcarbamoylase at 3.0-A resolution.</title>
        <authorList>
            <person name="Stevens R.C."/>
            <person name="Reinisch K.M."/>
            <person name="Lipscomb W.N."/>
        </authorList>
    </citation>
    <scope>X-RAY CRYSTALLOGRAPHY (3.0 ANGSTROMS)</scope>
</reference>